<evidence type="ECO:0000255" key="1"/>
<reference key="1">
    <citation type="journal article" date="1997" name="Nature">
        <title>The complete genome sequence of the hyperthermophilic, sulphate-reducing archaeon Archaeoglobus fulgidus.</title>
        <authorList>
            <person name="Klenk H.-P."/>
            <person name="Clayton R.A."/>
            <person name="Tomb J.-F."/>
            <person name="White O."/>
            <person name="Nelson K.E."/>
            <person name="Ketchum K.A."/>
            <person name="Dodson R.J."/>
            <person name="Gwinn M.L."/>
            <person name="Hickey E.K."/>
            <person name="Peterson J.D."/>
            <person name="Richardson D.L."/>
            <person name="Kerlavage A.R."/>
            <person name="Graham D.E."/>
            <person name="Kyrpides N.C."/>
            <person name="Fleischmann R.D."/>
            <person name="Quackenbush J."/>
            <person name="Lee N.H."/>
            <person name="Sutton G.G."/>
            <person name="Gill S.R."/>
            <person name="Kirkness E.F."/>
            <person name="Dougherty B.A."/>
            <person name="McKenney K."/>
            <person name="Adams M.D."/>
            <person name="Loftus B.J."/>
            <person name="Peterson S.N."/>
            <person name="Reich C.I."/>
            <person name="McNeil L.K."/>
            <person name="Badger J.H."/>
            <person name="Glodek A."/>
            <person name="Zhou L."/>
            <person name="Overbeek R."/>
            <person name="Gocayne J.D."/>
            <person name="Weidman J.F."/>
            <person name="McDonald L.A."/>
            <person name="Utterback T.R."/>
            <person name="Cotton M.D."/>
            <person name="Spriggs T."/>
            <person name="Artiach P."/>
            <person name="Kaine B.P."/>
            <person name="Sykes S.M."/>
            <person name="Sadow P.W."/>
            <person name="D'Andrea K.P."/>
            <person name="Bowman C."/>
            <person name="Fujii C."/>
            <person name="Garland S.A."/>
            <person name="Mason T.M."/>
            <person name="Olsen G.J."/>
            <person name="Fraser C.M."/>
            <person name="Smith H.O."/>
            <person name="Woese C.R."/>
            <person name="Venter J.C."/>
        </authorList>
    </citation>
    <scope>NUCLEOTIDE SEQUENCE [LARGE SCALE GENOMIC DNA]</scope>
    <source>
        <strain>ATCC 49558 / DSM 4304 / JCM 9628 / NBRC 100126 / VC-16</strain>
    </source>
</reference>
<sequence>MKSVKIIIILALALLIQISHIADAKTYTVNFSSIGGLEVTPDSPHPKAWHRDTRDLPSNPYYTSDRTPFTQADIDLIESPDSSGFSSGGQDTHHFYFSIPQNANVVVRWRGHAQEDGDYVTLYYWDGSSWQKLEETTSGSWTWISGSFTASCEAHILAVGHDGSLEYTHPTSDYVEIEVSVANPLPVSVVKAEGNPRNYDGFFDTDTITLYAKVVSNGNPVPDYPVKFYAEFDSQRIFLGGAWTNSSGIAKLSFIPKNVGLSDKLRVNFVAKIEDVMTNCNAYTTTTNRAILAENVAITPGSYDITLVGRMYYSGGADWVRVNWYVDENSVLKPYPIPVVQKFTGNRASVTIWKYGLDDYCTDPNCHREGIYGNFDDADWDGACIAVGSTTPMCGRDVGGACYGDPDGPLKGRHDCTYFSGYRVGPFVQMNIPDHALGFLAAMVIQLFGGGELDDFMRATHYDQHEGPYGVLVSNAGCGALNPSTEQALTHGALGLFADPKGGLGVVGFVGLIADNEHAIGIMMGHRYGIHPFTAIVTTVPNYPSDEAGWRNYMDTWLYYLLNNAVYIAKTTGEELAAWSLRYPTQSDVVNLNRAFNDFITDFLPYMHEVLWLVVNCGKTVNHPFIISTFVQFKDNFEIVHRIMLNSTLNNALGNLISEVLLQLPNVVGPPDASTGINYLLNHRQYLSYSEREIFGYRMLQLLDQLTEVVVTLLKEIPLMEQSSRDNPGWDFNWIAGCGEG</sequence>
<feature type="signal peptide" evidence="1">
    <location>
        <begin position="1"/>
        <end position="22"/>
    </location>
</feature>
<feature type="chain" id="PRO_0000013681" description="Uncharacterized protein AF_2119">
    <location>
        <begin position="23"/>
        <end position="741"/>
    </location>
</feature>
<organism>
    <name type="scientific">Archaeoglobus fulgidus (strain ATCC 49558 / DSM 4304 / JCM 9628 / NBRC 100126 / VC-16)</name>
    <dbReference type="NCBI Taxonomy" id="224325"/>
    <lineage>
        <taxon>Archaea</taxon>
        <taxon>Methanobacteriati</taxon>
        <taxon>Methanobacteriota</taxon>
        <taxon>Archaeoglobi</taxon>
        <taxon>Archaeoglobales</taxon>
        <taxon>Archaeoglobaceae</taxon>
        <taxon>Archaeoglobus</taxon>
    </lineage>
</organism>
<name>Y2119_ARCFU</name>
<protein>
    <recommendedName>
        <fullName>Uncharacterized protein AF_2119</fullName>
    </recommendedName>
</protein>
<proteinExistence type="inferred from homology"/>
<accession>O28161</accession>
<keyword id="KW-1185">Reference proteome</keyword>
<keyword id="KW-0732">Signal</keyword>
<gene>
    <name type="ordered locus">AF_2119</name>
</gene>
<dbReference type="EMBL" id="AE000782">
    <property type="protein sequence ID" value="AAB89151.1"/>
    <property type="molecule type" value="Genomic_DNA"/>
</dbReference>
<dbReference type="PIR" id="G69514">
    <property type="entry name" value="G69514"/>
</dbReference>
<dbReference type="RefSeq" id="WP_010879610.1">
    <property type="nucleotide sequence ID" value="NC_000917.1"/>
</dbReference>
<dbReference type="STRING" id="224325.AF_2119"/>
<dbReference type="PaxDb" id="224325-AF_2119"/>
<dbReference type="EnsemblBacteria" id="AAB89151">
    <property type="protein sequence ID" value="AAB89151"/>
    <property type="gene ID" value="AF_2119"/>
</dbReference>
<dbReference type="GeneID" id="1485348"/>
<dbReference type="KEGG" id="afu:AF_2119"/>
<dbReference type="HOGENOM" id="CLU_374545_0_0_2"/>
<dbReference type="Proteomes" id="UP000002199">
    <property type="component" value="Chromosome"/>
</dbReference>
<dbReference type="InterPro" id="IPR008964">
    <property type="entry name" value="Invasin/intimin_cell_adhesion"/>
</dbReference>
<dbReference type="SUPFAM" id="SSF49373">
    <property type="entry name" value="Invasin/intimin cell-adhesion fragments"/>
    <property type="match status" value="1"/>
</dbReference>